<evidence type="ECO:0000256" key="1">
    <source>
        <dbReference type="SAM" id="MobiDB-lite"/>
    </source>
</evidence>
<evidence type="ECO:0000269" key="2">
    <source>
    </source>
</evidence>
<evidence type="ECO:0000303" key="3">
    <source>
    </source>
</evidence>
<evidence type="ECO:0000305" key="4">
    <source>
    </source>
</evidence>
<accession>I1S490</accession>
<accession>A0A098CZ17</accession>
<keyword id="KW-1185">Reference proteome</keyword>
<keyword id="KW-0843">Virulence</keyword>
<name>GRA3_GIBZE</name>
<feature type="chain" id="PRO_0000450568" description="Gramillins biosynthetic cluster protein FGSG_11657">
    <location>
        <begin position="1"/>
        <end position="740"/>
    </location>
</feature>
<feature type="region of interest" description="Disordered" evidence="1">
    <location>
        <begin position="353"/>
        <end position="391"/>
    </location>
</feature>
<feature type="region of interest" description="Disordered" evidence="1">
    <location>
        <begin position="414"/>
        <end position="434"/>
    </location>
</feature>
<feature type="region of interest" description="Disordered" evidence="1">
    <location>
        <begin position="514"/>
        <end position="535"/>
    </location>
</feature>
<feature type="region of interest" description="Disordered" evidence="1">
    <location>
        <begin position="656"/>
        <end position="686"/>
    </location>
</feature>
<feature type="compositionally biased region" description="Basic and acidic residues" evidence="1">
    <location>
        <begin position="656"/>
        <end position="667"/>
    </location>
</feature>
<feature type="compositionally biased region" description="Polar residues" evidence="1">
    <location>
        <begin position="668"/>
        <end position="682"/>
    </location>
</feature>
<gene>
    <name type="ORF">FGRAMPH1_01T00139</name>
    <name type="ORF">FGSG_11657</name>
</gene>
<dbReference type="EMBL" id="HG970332">
    <property type="protein sequence ID" value="CEF71869.1"/>
    <property type="molecule type" value="Genomic_DNA"/>
</dbReference>
<dbReference type="RefSeq" id="XP_011315628.1">
    <property type="nucleotide sequence ID" value="XM_011317326.1"/>
</dbReference>
<dbReference type="STRING" id="229533.I1S490"/>
<dbReference type="GeneID" id="23558476"/>
<dbReference type="KEGG" id="fgr:FGSG_11657"/>
<dbReference type="VEuPathDB" id="FungiDB:FGRAMPH1_01G00139"/>
<dbReference type="HOGENOM" id="CLU_375072_0_0_1"/>
<dbReference type="InParanoid" id="I1S490"/>
<dbReference type="OrthoDB" id="141870at110618"/>
<dbReference type="Proteomes" id="UP000070720">
    <property type="component" value="Chromosome 1"/>
</dbReference>
<dbReference type="InterPro" id="IPR013860">
    <property type="entry name" value="AreA_GATA"/>
</dbReference>
<dbReference type="Pfam" id="PF08550">
    <property type="entry name" value="GATA_AreA"/>
    <property type="match status" value="1"/>
</dbReference>
<comment type="function">
    <text evidence="2 4">Part of the gene cluster that mediates the biosynthesis of gramillins A and B, bicyclic lipopeptides that induce cell death in maize leaves but not in wheat leaves (PubMed:30395461). The nonribosomal peptide synthetase GRA1 incorporates respectively a glutamic adic (Glu), a leucine (Leu), a serine (Ser), a hydroxyglutamine (HOGln), a 2-amino decanoic acid, and 2 cysteins (CysB and CysA) (Probable). The biosynthesis of 2-amino decanoic acid incorporated in gramillins could be initiated by a fatty acid synthase composed of the alpha and beta subunits FGSG_00036 and FGSG_11656 (Probable). The cytochrome P450 monooxygenase FGSG_15680 could hydroxylate the fatty acid chain (Probable). Subsequent oxidation to the ketone by the oxidoreductase FGSG_00048 and transamination by aminotransferase FGSG_00049 could form 2-amino-decanoic acid (Probable). On the other hand, FGSG_15680 could also be responsible for the HO-modified glutamine at the gamma-position (Probable). Whether hydroxylation occurs on the fully assembled product or on the Gln residue prior to assembly into the gramillins requires further proof (Probable). The thioredoxin FGSG_00043 could also be required for the disulfide-bond formation between CysA and CysB (Probable). The specific involvement of the remaining proteins from the cluster is more difficult to discern, but could have broader regulatory (FGSG_00040 and FGSG_11657) or enzymatic functions (FGSG_00044 and FGSG_00045) (Probable). The final C-domain of GRA1 does not possess the expected sequence of a termination CT domain, often implicated in macrocyclization and release of a cyclopeptidein fungal NRPs; and the thioesterase FGSG_00047 may act in concert with the terminal C-domain of GRA1 to catalyze the formation of the macrocyclic anhydride and release of the products (Probable).</text>
</comment>
<comment type="pathway">
    <text evidence="4">Mycotoxin biosynthesis.</text>
</comment>
<sequence>MPTPVESHSLLHSGLTLCGSIISVNQDRRKTSTLGCVIQVGSGFYGLTAAHAVRKSRAYPTLPLNSHTDEGLGAASDGPMTSHVLRNWQNPFMACKNAEAVELDDHSTSEVAVDESVEDVDFVTDVEYEDLREDDDNHGDDSTTSMPNDVFHEDYLTSAPQEGMMETQAMFLSIPELNDKCLVSRRARPNMAHRVTHGDSGSIVIDARTNVVYGHVVASNPLGEIYISPIGATLEQIQSHFPGSKVSLPDPLTILTGLATFGHETIGRKRARYPDKLRNLGLSPDTEYTRLVTPTANKSLDFSNYPKFHYFHQCSEDSSSNRRVNEVEKSQPANLTLDCNTVELGLRQSTWHQADSPVPLSSVKEESGLGKLARSPAEPAPSRPLPGSSIPVVISQSTGRELYSNGVTEATLSSKLSDEAEADTSIKPDSDAASPTDCRIIGHLRTRPVGLERDLSSTYNAALSMDQDPEELLQQDIFPMRVWRSLSTLKQRLPSQERLENLTWRMTHINLRKPKEQEEPKRHRTSNNSIVGSSDIADVGKTSKQKAIQPNIVELDVVTSPENIPLPASLVPISSSEATWQVDKKSVSSVTFGQSSGCFPPSYQGFRPDAPEKGNLPRATTTSYHLPPQPIGWPTCIPSNMKWHSLVNMSTLAADEHEGEGRADTNRHVSTQSNMPTEQSLLPQGDESVPPTCTNCFTLTCDILARNENVDQLAIDAPGHITSAKAVYNLYTFISYLLIF</sequence>
<protein>
    <recommendedName>
        <fullName evidence="3">Gramillins biosynthetic cluster protein FGSG_11657</fullName>
    </recommendedName>
</protein>
<organism>
    <name type="scientific">Gibberella zeae (strain ATCC MYA-4620 / CBS 123657 / FGSC 9075 / NRRL 31084 / PH-1)</name>
    <name type="common">Wheat head blight fungus</name>
    <name type="synonym">Fusarium graminearum</name>
    <dbReference type="NCBI Taxonomy" id="229533"/>
    <lineage>
        <taxon>Eukaryota</taxon>
        <taxon>Fungi</taxon>
        <taxon>Dikarya</taxon>
        <taxon>Ascomycota</taxon>
        <taxon>Pezizomycotina</taxon>
        <taxon>Sordariomycetes</taxon>
        <taxon>Hypocreomycetidae</taxon>
        <taxon>Hypocreales</taxon>
        <taxon>Nectriaceae</taxon>
        <taxon>Fusarium</taxon>
    </lineage>
</organism>
<reference key="1">
    <citation type="journal article" date="2007" name="Science">
        <title>The Fusarium graminearum genome reveals a link between localized polymorphism and pathogen specialization.</title>
        <authorList>
            <person name="Cuomo C.A."/>
            <person name="Gueldener U."/>
            <person name="Xu J.-R."/>
            <person name="Trail F."/>
            <person name="Turgeon B.G."/>
            <person name="Di Pietro A."/>
            <person name="Walton J.D."/>
            <person name="Ma L.-J."/>
            <person name="Baker S.E."/>
            <person name="Rep M."/>
            <person name="Adam G."/>
            <person name="Antoniw J."/>
            <person name="Baldwin T."/>
            <person name="Calvo S.E."/>
            <person name="Chang Y.-L."/>
            <person name="DeCaprio D."/>
            <person name="Gale L.R."/>
            <person name="Gnerre S."/>
            <person name="Goswami R.S."/>
            <person name="Hammond-Kosack K."/>
            <person name="Harris L.J."/>
            <person name="Hilburn K."/>
            <person name="Kennell J.C."/>
            <person name="Kroken S."/>
            <person name="Magnuson J.K."/>
            <person name="Mannhaupt G."/>
            <person name="Mauceli E.W."/>
            <person name="Mewes H.-W."/>
            <person name="Mitterbauer R."/>
            <person name="Muehlbauer G."/>
            <person name="Muensterkoetter M."/>
            <person name="Nelson D."/>
            <person name="O'Donnell K."/>
            <person name="Ouellet T."/>
            <person name="Qi W."/>
            <person name="Quesneville H."/>
            <person name="Roncero M.I.G."/>
            <person name="Seong K.-Y."/>
            <person name="Tetko I.V."/>
            <person name="Urban M."/>
            <person name="Waalwijk C."/>
            <person name="Ward T.J."/>
            <person name="Yao J."/>
            <person name="Birren B.W."/>
            <person name="Kistler H.C."/>
        </authorList>
    </citation>
    <scope>NUCLEOTIDE SEQUENCE [LARGE SCALE GENOMIC DNA]</scope>
    <source>
        <strain>ATCC MYA-4620 / CBS 123657 / FGSC 9075 / NRRL 31084 / PH-1</strain>
    </source>
</reference>
<reference key="2">
    <citation type="journal article" date="2010" name="Nature">
        <title>Comparative genomics reveals mobile pathogenicity chromosomes in Fusarium.</title>
        <authorList>
            <person name="Ma L.-J."/>
            <person name="van der Does H.C."/>
            <person name="Borkovich K.A."/>
            <person name="Coleman J.J."/>
            <person name="Daboussi M.-J."/>
            <person name="Di Pietro A."/>
            <person name="Dufresne M."/>
            <person name="Freitag M."/>
            <person name="Grabherr M."/>
            <person name="Henrissat B."/>
            <person name="Houterman P.M."/>
            <person name="Kang S."/>
            <person name="Shim W.-B."/>
            <person name="Woloshuk C."/>
            <person name="Xie X."/>
            <person name="Xu J.-R."/>
            <person name="Antoniw J."/>
            <person name="Baker S.E."/>
            <person name="Bluhm B.H."/>
            <person name="Breakspear A."/>
            <person name="Brown D.W."/>
            <person name="Butchko R.A.E."/>
            <person name="Chapman S."/>
            <person name="Coulson R."/>
            <person name="Coutinho P.M."/>
            <person name="Danchin E.G.J."/>
            <person name="Diener A."/>
            <person name="Gale L.R."/>
            <person name="Gardiner D.M."/>
            <person name="Goff S."/>
            <person name="Hammond-Kosack K.E."/>
            <person name="Hilburn K."/>
            <person name="Hua-Van A."/>
            <person name="Jonkers W."/>
            <person name="Kazan K."/>
            <person name="Kodira C.D."/>
            <person name="Koehrsen M."/>
            <person name="Kumar L."/>
            <person name="Lee Y.-H."/>
            <person name="Li L."/>
            <person name="Manners J.M."/>
            <person name="Miranda-Saavedra D."/>
            <person name="Mukherjee M."/>
            <person name="Park G."/>
            <person name="Park J."/>
            <person name="Park S.-Y."/>
            <person name="Proctor R.H."/>
            <person name="Regev A."/>
            <person name="Ruiz-Roldan M.C."/>
            <person name="Sain D."/>
            <person name="Sakthikumar S."/>
            <person name="Sykes S."/>
            <person name="Schwartz D.C."/>
            <person name="Turgeon B.G."/>
            <person name="Wapinski I."/>
            <person name="Yoder O."/>
            <person name="Young S."/>
            <person name="Zeng Q."/>
            <person name="Zhou S."/>
            <person name="Galagan J."/>
            <person name="Cuomo C.A."/>
            <person name="Kistler H.C."/>
            <person name="Rep M."/>
        </authorList>
    </citation>
    <scope>GENOME REANNOTATION</scope>
    <source>
        <strain>ATCC MYA-4620 / CBS 123657 / FGSC 9075 / NRRL 31084 / PH-1</strain>
    </source>
</reference>
<reference key="3">
    <citation type="journal article" date="2015" name="BMC Genomics">
        <title>The completed genome sequence of the pathogenic ascomycete fungus Fusarium graminearum.</title>
        <authorList>
            <person name="King R."/>
            <person name="Urban M."/>
            <person name="Hammond-Kosack M.C.U."/>
            <person name="Hassani-Pak K."/>
            <person name="Hammond-Kosack K.E."/>
        </authorList>
    </citation>
    <scope>NUCLEOTIDE SEQUENCE [LARGE SCALE GENOMIC DNA]</scope>
    <source>
        <strain>ATCC MYA-4620 / CBS 123657 / FGSC 9075 / NRRL 31084 / PH-1</strain>
    </source>
</reference>
<reference key="4">
    <citation type="journal article" date="2018" name="J. Am. Chem. Soc.">
        <title>Gramillin A and B: cyclic lipopeptides identified as the nonribosomal biosynthetic products of Fusarium graminearum.</title>
        <authorList>
            <person name="Bahadoor A."/>
            <person name="Brauer E.K."/>
            <person name="Bosnich W."/>
            <person name="Schneiderman D."/>
            <person name="Johnston A."/>
            <person name="Aubin Y."/>
            <person name="Blackwell B."/>
            <person name="Melanson J.E."/>
            <person name="Harris L.J."/>
        </authorList>
    </citation>
    <scope>FUNCTION</scope>
    <scope>PATHWAY</scope>
</reference>
<proteinExistence type="predicted"/>